<evidence type="ECO:0000255" key="1">
    <source>
        <dbReference type="HAMAP-Rule" id="MF_00203"/>
    </source>
</evidence>
<evidence type="ECO:0000256" key="2">
    <source>
        <dbReference type="SAM" id="MobiDB-lite"/>
    </source>
</evidence>
<feature type="chain" id="PRO_1000099501" description="UvrABC system protein C">
    <location>
        <begin position="1"/>
        <end position="671"/>
    </location>
</feature>
<feature type="domain" description="GIY-YIG" evidence="1">
    <location>
        <begin position="16"/>
        <end position="95"/>
    </location>
</feature>
<feature type="domain" description="UVR" evidence="1">
    <location>
        <begin position="208"/>
        <end position="243"/>
    </location>
</feature>
<feature type="region of interest" description="Disordered" evidence="2">
    <location>
        <begin position="645"/>
        <end position="671"/>
    </location>
</feature>
<accession>B1MC92</accession>
<proteinExistence type="inferred from homology"/>
<dbReference type="EMBL" id="CU458896">
    <property type="protein sequence ID" value="CAM62863.1"/>
    <property type="molecule type" value="Genomic_DNA"/>
</dbReference>
<dbReference type="RefSeq" id="WP_005082304.1">
    <property type="nucleotide sequence ID" value="NZ_MLCG01000003.1"/>
</dbReference>
<dbReference type="SMR" id="B1MC92"/>
<dbReference type="GeneID" id="93379715"/>
<dbReference type="KEGG" id="mab:MAB_2784c"/>
<dbReference type="Proteomes" id="UP000007137">
    <property type="component" value="Chromosome"/>
</dbReference>
<dbReference type="GO" id="GO:0005737">
    <property type="term" value="C:cytoplasm"/>
    <property type="evidence" value="ECO:0007669"/>
    <property type="project" value="UniProtKB-SubCell"/>
</dbReference>
<dbReference type="GO" id="GO:0009380">
    <property type="term" value="C:excinuclease repair complex"/>
    <property type="evidence" value="ECO:0007669"/>
    <property type="project" value="InterPro"/>
</dbReference>
<dbReference type="GO" id="GO:0003677">
    <property type="term" value="F:DNA binding"/>
    <property type="evidence" value="ECO:0007669"/>
    <property type="project" value="UniProtKB-UniRule"/>
</dbReference>
<dbReference type="GO" id="GO:0009381">
    <property type="term" value="F:excinuclease ABC activity"/>
    <property type="evidence" value="ECO:0007669"/>
    <property type="project" value="UniProtKB-UniRule"/>
</dbReference>
<dbReference type="GO" id="GO:0006289">
    <property type="term" value="P:nucleotide-excision repair"/>
    <property type="evidence" value="ECO:0007669"/>
    <property type="project" value="UniProtKB-UniRule"/>
</dbReference>
<dbReference type="GO" id="GO:0009432">
    <property type="term" value="P:SOS response"/>
    <property type="evidence" value="ECO:0007669"/>
    <property type="project" value="UniProtKB-UniRule"/>
</dbReference>
<dbReference type="CDD" id="cd10434">
    <property type="entry name" value="GIY-YIG_UvrC_Cho"/>
    <property type="match status" value="1"/>
</dbReference>
<dbReference type="FunFam" id="3.30.420.340:FF:000003">
    <property type="entry name" value="UvrABC system protein C"/>
    <property type="match status" value="1"/>
</dbReference>
<dbReference type="FunFam" id="3.40.1440.10:FF:000001">
    <property type="entry name" value="UvrABC system protein C"/>
    <property type="match status" value="1"/>
</dbReference>
<dbReference type="Gene3D" id="1.10.150.20">
    <property type="entry name" value="5' to 3' exonuclease, C-terminal subdomain"/>
    <property type="match status" value="1"/>
</dbReference>
<dbReference type="Gene3D" id="3.40.1440.10">
    <property type="entry name" value="GIY-YIG endonuclease"/>
    <property type="match status" value="1"/>
</dbReference>
<dbReference type="Gene3D" id="4.10.860.10">
    <property type="entry name" value="UVR domain"/>
    <property type="match status" value="1"/>
</dbReference>
<dbReference type="Gene3D" id="3.30.420.340">
    <property type="entry name" value="UvrC, RNAse H endonuclease domain"/>
    <property type="match status" value="1"/>
</dbReference>
<dbReference type="HAMAP" id="MF_00203">
    <property type="entry name" value="UvrC"/>
    <property type="match status" value="1"/>
</dbReference>
<dbReference type="InterPro" id="IPR000305">
    <property type="entry name" value="GIY-YIG_endonuc"/>
</dbReference>
<dbReference type="InterPro" id="IPR035901">
    <property type="entry name" value="GIY-YIG_endonuc_sf"/>
</dbReference>
<dbReference type="InterPro" id="IPR047296">
    <property type="entry name" value="GIY-YIG_UvrC_Cho"/>
</dbReference>
<dbReference type="InterPro" id="IPR003583">
    <property type="entry name" value="Hlx-hairpin-Hlx_DNA-bd_motif"/>
</dbReference>
<dbReference type="InterPro" id="IPR010994">
    <property type="entry name" value="RuvA_2-like"/>
</dbReference>
<dbReference type="InterPro" id="IPR001943">
    <property type="entry name" value="UVR_dom"/>
</dbReference>
<dbReference type="InterPro" id="IPR036876">
    <property type="entry name" value="UVR_dom_sf"/>
</dbReference>
<dbReference type="InterPro" id="IPR050066">
    <property type="entry name" value="UvrABC_protein_C"/>
</dbReference>
<dbReference type="InterPro" id="IPR004791">
    <property type="entry name" value="UvrC"/>
</dbReference>
<dbReference type="InterPro" id="IPR001162">
    <property type="entry name" value="UvrC_RNase_H_dom"/>
</dbReference>
<dbReference type="InterPro" id="IPR038476">
    <property type="entry name" value="UvrC_RNase_H_dom_sf"/>
</dbReference>
<dbReference type="NCBIfam" id="NF001824">
    <property type="entry name" value="PRK00558.1-5"/>
    <property type="match status" value="1"/>
</dbReference>
<dbReference type="NCBIfam" id="TIGR00194">
    <property type="entry name" value="uvrC"/>
    <property type="match status" value="1"/>
</dbReference>
<dbReference type="PANTHER" id="PTHR30562:SF1">
    <property type="entry name" value="UVRABC SYSTEM PROTEIN C"/>
    <property type="match status" value="1"/>
</dbReference>
<dbReference type="PANTHER" id="PTHR30562">
    <property type="entry name" value="UVRC/OXIDOREDUCTASE"/>
    <property type="match status" value="1"/>
</dbReference>
<dbReference type="Pfam" id="PF01541">
    <property type="entry name" value="GIY-YIG"/>
    <property type="match status" value="1"/>
</dbReference>
<dbReference type="Pfam" id="PF14520">
    <property type="entry name" value="HHH_5"/>
    <property type="match status" value="1"/>
</dbReference>
<dbReference type="Pfam" id="PF02151">
    <property type="entry name" value="UVR"/>
    <property type="match status" value="1"/>
</dbReference>
<dbReference type="Pfam" id="PF22920">
    <property type="entry name" value="UvrC_RNaseH"/>
    <property type="match status" value="1"/>
</dbReference>
<dbReference type="Pfam" id="PF08459">
    <property type="entry name" value="UvrC_RNaseH_dom"/>
    <property type="match status" value="1"/>
</dbReference>
<dbReference type="SMART" id="SM00465">
    <property type="entry name" value="GIYc"/>
    <property type="match status" value="1"/>
</dbReference>
<dbReference type="SMART" id="SM00278">
    <property type="entry name" value="HhH1"/>
    <property type="match status" value="2"/>
</dbReference>
<dbReference type="SUPFAM" id="SSF46600">
    <property type="entry name" value="C-terminal UvrC-binding domain of UvrB"/>
    <property type="match status" value="1"/>
</dbReference>
<dbReference type="SUPFAM" id="SSF82771">
    <property type="entry name" value="GIY-YIG endonuclease"/>
    <property type="match status" value="1"/>
</dbReference>
<dbReference type="SUPFAM" id="SSF47781">
    <property type="entry name" value="RuvA domain 2-like"/>
    <property type="match status" value="1"/>
</dbReference>
<dbReference type="PROSITE" id="PS50164">
    <property type="entry name" value="GIY_YIG"/>
    <property type="match status" value="1"/>
</dbReference>
<dbReference type="PROSITE" id="PS50151">
    <property type="entry name" value="UVR"/>
    <property type="match status" value="1"/>
</dbReference>
<dbReference type="PROSITE" id="PS50165">
    <property type="entry name" value="UVRC"/>
    <property type="match status" value="1"/>
</dbReference>
<keyword id="KW-0963">Cytoplasm</keyword>
<keyword id="KW-0227">DNA damage</keyword>
<keyword id="KW-0228">DNA excision</keyword>
<keyword id="KW-0234">DNA repair</keyword>
<keyword id="KW-0267">Excision nuclease</keyword>
<keyword id="KW-1185">Reference proteome</keyword>
<keyword id="KW-0742">SOS response</keyword>
<comment type="function">
    <text evidence="1">The UvrABC repair system catalyzes the recognition and processing of DNA lesions. UvrC both incises the 5' and 3' sides of the lesion. The N-terminal half is responsible for the 3' incision and the C-terminal half is responsible for the 5' incision.</text>
</comment>
<comment type="subunit">
    <text evidence="1">Interacts with UvrB in an incision complex.</text>
</comment>
<comment type="subcellular location">
    <subcellularLocation>
        <location evidence="1">Cytoplasm</location>
    </subcellularLocation>
</comment>
<comment type="similarity">
    <text evidence="1">Belongs to the UvrC family.</text>
</comment>
<reference key="1">
    <citation type="journal article" date="2009" name="PLoS ONE">
        <title>Non mycobacterial virulence genes in the genome of the emerging pathogen Mycobacterium abscessus.</title>
        <authorList>
            <person name="Ripoll F."/>
            <person name="Pasek S."/>
            <person name="Schenowitz C."/>
            <person name="Dossat C."/>
            <person name="Barbe V."/>
            <person name="Rottman M."/>
            <person name="Macheras E."/>
            <person name="Heym B."/>
            <person name="Herrmann J.L."/>
            <person name="Daffe M."/>
            <person name="Brosch R."/>
            <person name="Risler J.L."/>
            <person name="Gaillard J.L."/>
        </authorList>
    </citation>
    <scope>NUCLEOTIDE SEQUENCE [LARGE SCALE GENOMIC DNA]</scope>
    <source>
        <strain>ATCC 19977 / DSM 44196 / CCUG 20993 / CIP 104536 / JCM 13569 / NCTC 13031 / TMC 1543 / L948</strain>
    </source>
</reference>
<sequence length="671" mass="74201">MPDPSTYRPAPGSIPVEPGVYRFRDPHGRVIYVGKAKSLRSRLTSYFADITGLHPRTRQMVTTAGSVEWTVVGTEVEALQLEYNWIKEFDPRFNVRYRDDKSYPVLAVTLNEEYPRLFVYRGPRRKGVRYFGPYSHAWAIRETLDLLTRVFPARTCSNGVFKRHKQIDRPCLLGYIEKCSAPCIGRVSAQEHREIVLDFCDFLSGKTDRLARDMEREMNQAAQELNFERAARLRDNISALQRALERQTVVFGDGTDADVVAFSDDELEAAVQVFHVRGGRVRGQRGWIVEKTGDPGDSDLQGLVEQFLTQFYGDQADLVYAADTEADVAPVPREVLVPVLPRDAEGMTSWLTGLRGSRVSLRVPQRGDKKALAETVERNAKEALAQHKLKRAGDLTTRSAALQELQDALGLEQAPLRIECIDISHVQGTDVVASLVVFEDGLSRRSDYRHYSIREAAGDGRSDDVASIAEVTRRRFARHVQDQQAVTEYAAEGHSRKFAYPPNLFVVDGGAPQVNAAAAELSELGVTDVAVIGLAKRLEEVWVPGEPDPVILPRTSEALYLLQRVRDEAHRFAITFHRSKRSRRMTASVLDGIPGLGEARRAALVSHFGSVAQLKKASVEEITAVPGIGAATAVAVREALIETDSSAPSSGATEAVLPAMVENGVDDTPST</sequence>
<organism>
    <name type="scientific">Mycobacteroides abscessus (strain ATCC 19977 / DSM 44196 / CCUG 20993 / CIP 104536 / JCM 13569 / NCTC 13031 / TMC 1543 / L948)</name>
    <name type="common">Mycobacterium abscessus</name>
    <dbReference type="NCBI Taxonomy" id="561007"/>
    <lineage>
        <taxon>Bacteria</taxon>
        <taxon>Bacillati</taxon>
        <taxon>Actinomycetota</taxon>
        <taxon>Actinomycetes</taxon>
        <taxon>Mycobacteriales</taxon>
        <taxon>Mycobacteriaceae</taxon>
        <taxon>Mycobacteroides</taxon>
        <taxon>Mycobacteroides abscessus</taxon>
    </lineage>
</organism>
<protein>
    <recommendedName>
        <fullName evidence="1">UvrABC system protein C</fullName>
        <shortName evidence="1">Protein UvrC</shortName>
    </recommendedName>
    <alternativeName>
        <fullName evidence="1">Excinuclease ABC subunit C</fullName>
    </alternativeName>
</protein>
<name>UVRC_MYCA9</name>
<gene>
    <name evidence="1" type="primary">uvrC</name>
    <name type="ordered locus">MAB_2784c</name>
</gene>